<accession>Q73B98</accession>
<name>LEUC_BACC1</name>
<proteinExistence type="inferred from homology"/>
<protein>
    <recommendedName>
        <fullName evidence="1">3-isopropylmalate dehydratase large subunit</fullName>
        <ecNumber evidence="1">4.2.1.33</ecNumber>
    </recommendedName>
    <alternativeName>
        <fullName evidence="1">Alpha-IPM isomerase</fullName>
        <shortName evidence="1">IPMI</shortName>
    </alternativeName>
    <alternativeName>
        <fullName evidence="1">Isopropylmalate isomerase</fullName>
    </alternativeName>
</protein>
<keyword id="KW-0004">4Fe-4S</keyword>
<keyword id="KW-0028">Amino-acid biosynthesis</keyword>
<keyword id="KW-0100">Branched-chain amino acid biosynthesis</keyword>
<keyword id="KW-0408">Iron</keyword>
<keyword id="KW-0411">Iron-sulfur</keyword>
<keyword id="KW-0432">Leucine biosynthesis</keyword>
<keyword id="KW-0456">Lyase</keyword>
<keyword id="KW-0479">Metal-binding</keyword>
<organism>
    <name type="scientific">Bacillus cereus (strain ATCC 10987 / NRS 248)</name>
    <dbReference type="NCBI Taxonomy" id="222523"/>
    <lineage>
        <taxon>Bacteria</taxon>
        <taxon>Bacillati</taxon>
        <taxon>Bacillota</taxon>
        <taxon>Bacilli</taxon>
        <taxon>Bacillales</taxon>
        <taxon>Bacillaceae</taxon>
        <taxon>Bacillus</taxon>
        <taxon>Bacillus cereus group</taxon>
    </lineage>
</organism>
<comment type="function">
    <text evidence="1">Catalyzes the isomerization between 2-isopropylmalate and 3-isopropylmalate, via the formation of 2-isopropylmaleate.</text>
</comment>
<comment type="catalytic activity">
    <reaction evidence="1">
        <text>(2R,3S)-3-isopropylmalate = (2S)-2-isopropylmalate</text>
        <dbReference type="Rhea" id="RHEA:32287"/>
        <dbReference type="ChEBI" id="CHEBI:1178"/>
        <dbReference type="ChEBI" id="CHEBI:35121"/>
        <dbReference type="EC" id="4.2.1.33"/>
    </reaction>
</comment>
<comment type="cofactor">
    <cofactor evidence="1">
        <name>[4Fe-4S] cluster</name>
        <dbReference type="ChEBI" id="CHEBI:49883"/>
    </cofactor>
    <text evidence="1">Binds 1 [4Fe-4S] cluster per subunit.</text>
</comment>
<comment type="pathway">
    <text evidence="1">Amino-acid biosynthesis; L-leucine biosynthesis; L-leucine from 3-methyl-2-oxobutanoate: step 2/4.</text>
</comment>
<comment type="subunit">
    <text evidence="1">Heterodimer of LeuC and LeuD.</text>
</comment>
<comment type="similarity">
    <text evidence="1">Belongs to the aconitase/IPM isomerase family. LeuC type 1 subfamily.</text>
</comment>
<gene>
    <name evidence="1" type="primary">leuC</name>
    <name type="ordered locus">BCE_1522</name>
</gene>
<reference key="1">
    <citation type="journal article" date="2004" name="Nucleic Acids Res.">
        <title>The genome sequence of Bacillus cereus ATCC 10987 reveals metabolic adaptations and a large plasmid related to Bacillus anthracis pXO1.</title>
        <authorList>
            <person name="Rasko D.A."/>
            <person name="Ravel J."/>
            <person name="Oekstad O.A."/>
            <person name="Helgason E."/>
            <person name="Cer R.Z."/>
            <person name="Jiang L."/>
            <person name="Shores K.A."/>
            <person name="Fouts D.E."/>
            <person name="Tourasse N.J."/>
            <person name="Angiuoli S.V."/>
            <person name="Kolonay J.F."/>
            <person name="Nelson W.C."/>
            <person name="Kolstoe A.-B."/>
            <person name="Fraser C.M."/>
            <person name="Read T.D."/>
        </authorList>
    </citation>
    <scope>NUCLEOTIDE SEQUENCE [LARGE SCALE GENOMIC DNA]</scope>
    <source>
        <strain>ATCC 10987 / NRS 248</strain>
    </source>
</reference>
<feature type="chain" id="PRO_0000076694" description="3-isopropylmalate dehydratase large subunit">
    <location>
        <begin position="1"/>
        <end position="464"/>
    </location>
</feature>
<feature type="binding site" evidence="1">
    <location>
        <position position="337"/>
    </location>
    <ligand>
        <name>[4Fe-4S] cluster</name>
        <dbReference type="ChEBI" id="CHEBI:49883"/>
    </ligand>
</feature>
<feature type="binding site" evidence="1">
    <location>
        <position position="397"/>
    </location>
    <ligand>
        <name>[4Fe-4S] cluster</name>
        <dbReference type="ChEBI" id="CHEBI:49883"/>
    </ligand>
</feature>
<feature type="binding site" evidence="1">
    <location>
        <position position="400"/>
    </location>
    <ligand>
        <name>[4Fe-4S] cluster</name>
        <dbReference type="ChEBI" id="CHEBI:49883"/>
    </ligand>
</feature>
<sequence>MGKRLLDKLWERHVVATNENGLDLLYIDLHLVHEVTSPQAFEGLRLTNRTVRRPDLTFATMDHNIPTKDVWNITDRIAKQQLDTLRENCKQFQVPLADIGDEEQGIVHVIGPELGLTQPGKTIVCGDSHTATHGAFGALAFGIGTSEVEHVLATQTLWQRKPKAMGIELKGKLQKGVYAKDIILHLLSKYGVAVGTGYVMEFYGETIQAMEMEERMTLCNMAIEGGAKAGIIAPDEKTVAYVKGRKYAPKDYETFEKKWSELYTDADAMYDLHISIDVTDLAPYVTWGTNPSMGVRIDEKLPEKHDVNDERAFSYMGLSPGQSTYDIPVQHVFIGSCTNSRLSDLEIAASVVKGRKVKEGVRALVVPGSKRVRDAAMQKGLHHIFEEAGFEWREPGCSMCLGMNPDQVPEGEHCASTSNRNFEGRQGKGARTHLVSPAMAAAAALYGHFVDIRKESYDGAISYS</sequence>
<evidence type="ECO:0000255" key="1">
    <source>
        <dbReference type="HAMAP-Rule" id="MF_01026"/>
    </source>
</evidence>
<dbReference type="EC" id="4.2.1.33" evidence="1"/>
<dbReference type="EMBL" id="AE017194">
    <property type="protein sequence ID" value="AAS40451.1"/>
    <property type="molecule type" value="Genomic_DNA"/>
</dbReference>
<dbReference type="SMR" id="Q73B98"/>
<dbReference type="KEGG" id="bca:BCE_1522"/>
<dbReference type="HOGENOM" id="CLU_006714_3_4_9"/>
<dbReference type="UniPathway" id="UPA00048">
    <property type="reaction ID" value="UER00071"/>
</dbReference>
<dbReference type="Proteomes" id="UP000002527">
    <property type="component" value="Chromosome"/>
</dbReference>
<dbReference type="GO" id="GO:0003861">
    <property type="term" value="F:3-isopropylmalate dehydratase activity"/>
    <property type="evidence" value="ECO:0007669"/>
    <property type="project" value="UniProtKB-UniRule"/>
</dbReference>
<dbReference type="GO" id="GO:0051539">
    <property type="term" value="F:4 iron, 4 sulfur cluster binding"/>
    <property type="evidence" value="ECO:0007669"/>
    <property type="project" value="UniProtKB-KW"/>
</dbReference>
<dbReference type="GO" id="GO:0046872">
    <property type="term" value="F:metal ion binding"/>
    <property type="evidence" value="ECO:0007669"/>
    <property type="project" value="UniProtKB-KW"/>
</dbReference>
<dbReference type="GO" id="GO:0009098">
    <property type="term" value="P:L-leucine biosynthetic process"/>
    <property type="evidence" value="ECO:0007669"/>
    <property type="project" value="UniProtKB-UniRule"/>
</dbReference>
<dbReference type="CDD" id="cd01583">
    <property type="entry name" value="IPMI"/>
    <property type="match status" value="1"/>
</dbReference>
<dbReference type="FunFam" id="3.30.499.10:FF:000007">
    <property type="entry name" value="3-isopropylmalate dehydratase large subunit"/>
    <property type="match status" value="1"/>
</dbReference>
<dbReference type="Gene3D" id="3.30.499.10">
    <property type="entry name" value="Aconitase, domain 3"/>
    <property type="match status" value="2"/>
</dbReference>
<dbReference type="HAMAP" id="MF_01026">
    <property type="entry name" value="LeuC_type1"/>
    <property type="match status" value="1"/>
</dbReference>
<dbReference type="InterPro" id="IPR004430">
    <property type="entry name" value="3-IsopropMal_deHydase_lsu"/>
</dbReference>
<dbReference type="InterPro" id="IPR015931">
    <property type="entry name" value="Acnase/IPM_dHydase_lsu_aba_1/3"/>
</dbReference>
<dbReference type="InterPro" id="IPR001030">
    <property type="entry name" value="Acoase/IPM_deHydtase_lsu_aba"/>
</dbReference>
<dbReference type="InterPro" id="IPR018136">
    <property type="entry name" value="Aconitase_4Fe-4S_BS"/>
</dbReference>
<dbReference type="InterPro" id="IPR036008">
    <property type="entry name" value="Aconitase_4Fe-4S_dom"/>
</dbReference>
<dbReference type="InterPro" id="IPR050067">
    <property type="entry name" value="IPM_dehydratase_rel_enz"/>
</dbReference>
<dbReference type="InterPro" id="IPR033941">
    <property type="entry name" value="IPMI_cat"/>
</dbReference>
<dbReference type="NCBIfam" id="TIGR00170">
    <property type="entry name" value="leuC"/>
    <property type="match status" value="1"/>
</dbReference>
<dbReference type="NCBIfam" id="NF004016">
    <property type="entry name" value="PRK05478.1"/>
    <property type="match status" value="1"/>
</dbReference>
<dbReference type="NCBIfam" id="NF009116">
    <property type="entry name" value="PRK12466.1"/>
    <property type="match status" value="1"/>
</dbReference>
<dbReference type="PANTHER" id="PTHR43822:SF9">
    <property type="entry name" value="3-ISOPROPYLMALATE DEHYDRATASE"/>
    <property type="match status" value="1"/>
</dbReference>
<dbReference type="PANTHER" id="PTHR43822">
    <property type="entry name" value="HOMOACONITASE, MITOCHONDRIAL-RELATED"/>
    <property type="match status" value="1"/>
</dbReference>
<dbReference type="Pfam" id="PF00330">
    <property type="entry name" value="Aconitase"/>
    <property type="match status" value="1"/>
</dbReference>
<dbReference type="PRINTS" id="PR00415">
    <property type="entry name" value="ACONITASE"/>
</dbReference>
<dbReference type="SUPFAM" id="SSF53732">
    <property type="entry name" value="Aconitase iron-sulfur domain"/>
    <property type="match status" value="1"/>
</dbReference>
<dbReference type="PROSITE" id="PS00450">
    <property type="entry name" value="ACONITASE_1"/>
    <property type="match status" value="1"/>
</dbReference>
<dbReference type="PROSITE" id="PS01244">
    <property type="entry name" value="ACONITASE_2"/>
    <property type="match status" value="1"/>
</dbReference>